<feature type="initiator methionine" description="Removed" evidence="1">
    <location>
        <position position="1"/>
    </location>
</feature>
<feature type="chain" id="PRO_0000136759" description="Large ribosomal subunit protein eL8">
    <location>
        <begin position="2"/>
        <end position="259"/>
    </location>
</feature>
<feature type="region of interest" description="Disordered" evidence="3">
    <location>
        <begin position="1"/>
        <end position="24"/>
    </location>
</feature>
<feature type="modified residue" description="Phosphoserine" evidence="4">
    <location>
        <position position="11"/>
    </location>
</feature>
<feature type="modified residue" description="Phosphoserine" evidence="4">
    <location>
        <position position="33"/>
    </location>
</feature>
<feature type="helix" evidence="6">
    <location>
        <begin position="54"/>
        <end position="66"/>
    </location>
</feature>
<feature type="strand" evidence="6">
    <location>
        <begin position="69"/>
        <end position="71"/>
    </location>
</feature>
<feature type="helix" evidence="7">
    <location>
        <begin position="73"/>
        <end position="76"/>
    </location>
</feature>
<feature type="helix" evidence="7">
    <location>
        <begin position="77"/>
        <end position="79"/>
    </location>
</feature>
<feature type="helix" evidence="7">
    <location>
        <begin position="84"/>
        <end position="94"/>
    </location>
</feature>
<feature type="helix" evidence="8">
    <location>
        <begin position="95"/>
        <end position="97"/>
    </location>
</feature>
<feature type="helix" evidence="7">
    <location>
        <begin position="102"/>
        <end position="118"/>
    </location>
</feature>
<feature type="strand" evidence="6">
    <location>
        <begin position="133"/>
        <end position="135"/>
    </location>
</feature>
<feature type="helix" evidence="7">
    <location>
        <begin position="136"/>
        <end position="144"/>
    </location>
</feature>
<feature type="strand" evidence="7">
    <location>
        <begin position="149"/>
        <end position="154"/>
    </location>
</feature>
<feature type="helix" evidence="7">
    <location>
        <begin position="160"/>
        <end position="162"/>
    </location>
</feature>
<feature type="turn" evidence="7">
    <location>
        <begin position="163"/>
        <end position="165"/>
    </location>
</feature>
<feature type="helix" evidence="7">
    <location>
        <begin position="166"/>
        <end position="172"/>
    </location>
</feature>
<feature type="strand" evidence="7">
    <location>
        <begin position="177"/>
        <end position="181"/>
    </location>
</feature>
<feature type="helix" evidence="7">
    <location>
        <begin position="184"/>
        <end position="189"/>
    </location>
</feature>
<feature type="strand" evidence="7">
    <location>
        <begin position="196"/>
        <end position="200"/>
    </location>
</feature>
<feature type="helix" evidence="7">
    <location>
        <begin position="205"/>
        <end position="207"/>
    </location>
</feature>
<feature type="helix" evidence="7">
    <location>
        <begin position="208"/>
        <end position="221"/>
    </location>
</feature>
<feature type="strand" evidence="7">
    <location>
        <begin position="224"/>
        <end position="228"/>
    </location>
</feature>
<feature type="helix" evidence="7">
    <location>
        <begin position="229"/>
        <end position="231"/>
    </location>
</feature>
<evidence type="ECO:0000250" key="1"/>
<evidence type="ECO:0000250" key="2">
    <source>
        <dbReference type="UniProtKB" id="P17076"/>
    </source>
</evidence>
<evidence type="ECO:0000256" key="3">
    <source>
        <dbReference type="SAM" id="MobiDB-lite"/>
    </source>
</evidence>
<evidence type="ECO:0000269" key="4">
    <source>
    </source>
</evidence>
<evidence type="ECO:0000305" key="5"/>
<evidence type="ECO:0007829" key="6">
    <source>
        <dbReference type="PDB" id="8ETC"/>
    </source>
</evidence>
<evidence type="ECO:0007829" key="7">
    <source>
        <dbReference type="PDB" id="8EUY"/>
    </source>
</evidence>
<evidence type="ECO:0007829" key="8">
    <source>
        <dbReference type="PDB" id="8EV3"/>
    </source>
</evidence>
<name>RL8_SCHPO</name>
<accession>O13672</accession>
<proteinExistence type="evidence at protein level"/>
<protein>
    <recommendedName>
        <fullName evidence="5">Large ribosomal subunit protein eL8</fullName>
    </recommendedName>
    <alternativeName>
        <fullName>60S ribosomal protein L8</fullName>
    </alternativeName>
    <alternativeName>
        <fullName>L4</fullName>
    </alternativeName>
    <alternativeName>
        <fullName>L7A</fullName>
    </alternativeName>
</protein>
<sequence>MAPKSKKVAPSPFAQPKAAKTTKNPLFVSRPRSFGIGQDIQPKRDLSRFVKWPEYIRLQRRRKILNLRLKVPPAIAQFQKTLDKNTATQVFKLLNKYRPETAAEKKQRLVAEAEAVANGKSAQDVSKKPYNVKYGLNHVVALIEAKKAKLVLIASDVDPIELVVFLPALCKKMGVPYAIVKNKARLGTVIHQKTAAVLAVTEVREEDKNELASIVSAVDANFSAKYDESRRKWGGGIMGGKTQALLAKRAKAAAATVRL</sequence>
<keyword id="KW-0002">3D-structure</keyword>
<keyword id="KW-0963">Cytoplasm</keyword>
<keyword id="KW-0597">Phosphoprotein</keyword>
<keyword id="KW-1185">Reference proteome</keyword>
<keyword id="KW-0687">Ribonucleoprotein</keyword>
<keyword id="KW-0689">Ribosomal protein</keyword>
<dbReference type="EMBL" id="AJ001133">
    <property type="protein sequence ID" value="CAA04548.1"/>
    <property type="molecule type" value="Genomic_DNA"/>
</dbReference>
<dbReference type="EMBL" id="CU329671">
    <property type="protein sequence ID" value="CAA18381.1"/>
    <property type="molecule type" value="Genomic_DNA"/>
</dbReference>
<dbReference type="EMBL" id="AB005750">
    <property type="protein sequence ID" value="BAA21551.1"/>
    <property type="molecule type" value="mRNA"/>
</dbReference>
<dbReference type="PIR" id="T40075">
    <property type="entry name" value="T40075"/>
</dbReference>
<dbReference type="RefSeq" id="NP_595832.1">
    <property type="nucleotide sequence ID" value="NM_001021736.2"/>
</dbReference>
<dbReference type="PDB" id="8ESQ">
    <property type="method" value="EM"/>
    <property type="resolution" value="2.80 A"/>
    <property type="chains" value="G=1-259"/>
</dbReference>
<dbReference type="PDB" id="8ESR">
    <property type="method" value="EM"/>
    <property type="resolution" value="3.20 A"/>
    <property type="chains" value="G=1-259"/>
</dbReference>
<dbReference type="PDB" id="8ETC">
    <property type="method" value="EM"/>
    <property type="resolution" value="3.10 A"/>
    <property type="chains" value="G=1-259"/>
</dbReference>
<dbReference type="PDB" id="8ETG">
    <property type="method" value="EM"/>
    <property type="resolution" value="3.40 A"/>
    <property type="chains" value="G=1-259"/>
</dbReference>
<dbReference type="PDB" id="8ETH">
    <property type="method" value="EM"/>
    <property type="resolution" value="3.80 A"/>
    <property type="chains" value="G=1-259"/>
</dbReference>
<dbReference type="PDB" id="8ETI">
    <property type="method" value="EM"/>
    <property type="resolution" value="3.70 A"/>
    <property type="chains" value="G=1-259"/>
</dbReference>
<dbReference type="PDB" id="8ETJ">
    <property type="method" value="EM"/>
    <property type="resolution" value="3.20 A"/>
    <property type="chains" value="G=1-259"/>
</dbReference>
<dbReference type="PDB" id="8EUG">
    <property type="method" value="EM"/>
    <property type="resolution" value="2.80 A"/>
    <property type="chains" value="G=1-259"/>
</dbReference>
<dbReference type="PDB" id="8EUI">
    <property type="method" value="EM"/>
    <property type="resolution" value="3.10 A"/>
    <property type="chains" value="G=1-259"/>
</dbReference>
<dbReference type="PDB" id="8EUP">
    <property type="method" value="EM"/>
    <property type="resolution" value="3.10 A"/>
    <property type="chains" value="G=1-259"/>
</dbReference>
<dbReference type="PDB" id="8EUY">
    <property type="method" value="EM"/>
    <property type="resolution" value="3.00 A"/>
    <property type="chains" value="G=1-259"/>
</dbReference>
<dbReference type="PDB" id="8EV3">
    <property type="method" value="EM"/>
    <property type="resolution" value="3.00 A"/>
    <property type="chains" value="G=1-259"/>
</dbReference>
<dbReference type="PDB" id="9AXT">
    <property type="method" value="EM"/>
    <property type="resolution" value="2.40 A"/>
    <property type="chains" value="BT=1-259"/>
</dbReference>
<dbReference type="PDB" id="9AXU">
    <property type="method" value="EM"/>
    <property type="resolution" value="1.94 A"/>
    <property type="chains" value="T=1-259"/>
</dbReference>
<dbReference type="PDB" id="9AXV">
    <property type="method" value="EM"/>
    <property type="resolution" value="2.40 A"/>
    <property type="chains" value="BT=1-259"/>
</dbReference>
<dbReference type="PDBsum" id="8ESQ"/>
<dbReference type="PDBsum" id="8ESR"/>
<dbReference type="PDBsum" id="8ETC"/>
<dbReference type="PDBsum" id="8ETG"/>
<dbReference type="PDBsum" id="8ETH"/>
<dbReference type="PDBsum" id="8ETI"/>
<dbReference type="PDBsum" id="8ETJ"/>
<dbReference type="PDBsum" id="8EUG"/>
<dbReference type="PDBsum" id="8EUI"/>
<dbReference type="PDBsum" id="8EUP"/>
<dbReference type="PDBsum" id="8EUY"/>
<dbReference type="PDBsum" id="8EV3"/>
<dbReference type="PDBsum" id="9AXT"/>
<dbReference type="PDBsum" id="9AXU"/>
<dbReference type="PDBsum" id="9AXV"/>
<dbReference type="EMDB" id="EMD-43972"/>
<dbReference type="EMDB" id="EMD-43973"/>
<dbReference type="EMDB" id="EMD-43976"/>
<dbReference type="SMR" id="O13672"/>
<dbReference type="BioGRID" id="277045">
    <property type="interactions" value="14"/>
</dbReference>
<dbReference type="FunCoup" id="O13672">
    <property type="interactions" value="612"/>
</dbReference>
<dbReference type="IntAct" id="O13672">
    <property type="interactions" value="4"/>
</dbReference>
<dbReference type="MINT" id="O13672"/>
<dbReference type="STRING" id="284812.O13672"/>
<dbReference type="iPTMnet" id="O13672"/>
<dbReference type="PaxDb" id="4896-SPBC29A3.04.1"/>
<dbReference type="EnsemblFungi" id="SPBC29A3.04.1">
    <property type="protein sequence ID" value="SPBC29A3.04.1:pep"/>
    <property type="gene ID" value="SPBC29A3.04"/>
</dbReference>
<dbReference type="GeneID" id="2540517"/>
<dbReference type="KEGG" id="spo:2540517"/>
<dbReference type="PomBase" id="SPBC29A3.04">
    <property type="gene designation" value="rpl8"/>
</dbReference>
<dbReference type="VEuPathDB" id="FungiDB:SPBC29A3.04"/>
<dbReference type="eggNOG" id="KOG3166">
    <property type="taxonomic scope" value="Eukaryota"/>
</dbReference>
<dbReference type="HOGENOM" id="CLU_055193_0_1_1"/>
<dbReference type="InParanoid" id="O13672"/>
<dbReference type="OMA" id="AICVQNV"/>
<dbReference type="PhylomeDB" id="O13672"/>
<dbReference type="Reactome" id="R-SPO-156827">
    <property type="pathway name" value="L13a-mediated translational silencing of Ceruloplasmin expression"/>
</dbReference>
<dbReference type="Reactome" id="R-SPO-1799339">
    <property type="pathway name" value="SRP-dependent cotranslational protein targeting to membrane"/>
</dbReference>
<dbReference type="Reactome" id="R-SPO-72689">
    <property type="pathway name" value="Formation of a pool of free 40S subunits"/>
</dbReference>
<dbReference type="Reactome" id="R-SPO-72706">
    <property type="pathway name" value="GTP hydrolysis and joining of the 60S ribosomal subunit"/>
</dbReference>
<dbReference type="Reactome" id="R-SPO-975956">
    <property type="pathway name" value="Nonsense Mediated Decay (NMD) independent of the Exon Junction Complex (EJC)"/>
</dbReference>
<dbReference type="Reactome" id="R-SPO-975957">
    <property type="pathway name" value="Nonsense Mediated Decay (NMD) enhanced by the Exon Junction Complex (EJC)"/>
</dbReference>
<dbReference type="PRO" id="PR:O13672"/>
<dbReference type="Proteomes" id="UP000002485">
    <property type="component" value="Chromosome II"/>
</dbReference>
<dbReference type="GO" id="GO:0022625">
    <property type="term" value="C:cytosolic large ribosomal subunit"/>
    <property type="evidence" value="ECO:0000269"/>
    <property type="project" value="PomBase"/>
</dbReference>
<dbReference type="GO" id="GO:0030684">
    <property type="term" value="C:preribosome"/>
    <property type="evidence" value="ECO:0000314"/>
    <property type="project" value="PomBase"/>
</dbReference>
<dbReference type="GO" id="GO:0003723">
    <property type="term" value="F:RNA binding"/>
    <property type="evidence" value="ECO:0000318"/>
    <property type="project" value="GO_Central"/>
</dbReference>
<dbReference type="GO" id="GO:0003735">
    <property type="term" value="F:structural constituent of ribosome"/>
    <property type="evidence" value="ECO:0000266"/>
    <property type="project" value="PomBase"/>
</dbReference>
<dbReference type="GO" id="GO:0002181">
    <property type="term" value="P:cytoplasmic translation"/>
    <property type="evidence" value="ECO:0000266"/>
    <property type="project" value="PomBase"/>
</dbReference>
<dbReference type="GO" id="GO:0000470">
    <property type="term" value="P:maturation of LSU-rRNA"/>
    <property type="evidence" value="ECO:0000318"/>
    <property type="project" value="GO_Central"/>
</dbReference>
<dbReference type="FunFam" id="3.30.1330.30:FF:000003">
    <property type="entry name" value="60S ribosomal protein L7a"/>
    <property type="match status" value="1"/>
</dbReference>
<dbReference type="Gene3D" id="3.30.1330.30">
    <property type="match status" value="1"/>
</dbReference>
<dbReference type="InterPro" id="IPR050257">
    <property type="entry name" value="eL8/uL1-like"/>
</dbReference>
<dbReference type="InterPro" id="IPR029064">
    <property type="entry name" value="Ribosomal_eL30-like_sf"/>
</dbReference>
<dbReference type="InterPro" id="IPR004037">
    <property type="entry name" value="Ribosomal_eL8-like_CS"/>
</dbReference>
<dbReference type="InterPro" id="IPR004038">
    <property type="entry name" value="Ribosomal_eL8/eL30/eS12/Gad45"/>
</dbReference>
<dbReference type="InterPro" id="IPR018492">
    <property type="entry name" value="Ribosomal_eL8/Nhp2"/>
</dbReference>
<dbReference type="InterPro" id="IPR001921">
    <property type="entry name" value="Ribosomal_eL8_euk"/>
</dbReference>
<dbReference type="PANTHER" id="PTHR23105">
    <property type="entry name" value="RIBOSOMAL PROTEIN L7AE FAMILY MEMBER"/>
    <property type="match status" value="1"/>
</dbReference>
<dbReference type="Pfam" id="PF01248">
    <property type="entry name" value="Ribosomal_L7Ae"/>
    <property type="match status" value="1"/>
</dbReference>
<dbReference type="PRINTS" id="PR00881">
    <property type="entry name" value="L7ARS6FAMILY"/>
</dbReference>
<dbReference type="PRINTS" id="PR00882">
    <property type="entry name" value="RIBOSOMALL7A"/>
</dbReference>
<dbReference type="SUPFAM" id="SSF55315">
    <property type="entry name" value="L30e-like"/>
    <property type="match status" value="1"/>
</dbReference>
<dbReference type="PROSITE" id="PS01082">
    <property type="entry name" value="RIBOSOMAL_L7AE"/>
    <property type="match status" value="1"/>
</dbReference>
<gene>
    <name type="primary">rpl8</name>
    <name type="ORF">SPBC29A3.04</name>
</gene>
<reference key="1">
    <citation type="journal article" date="1998" name="Biochim. Biophys. Acta">
        <title>The gene for ribosomal protein L7A in Schizosaccharomyces pombe contains an intron after the initiation codon.</title>
        <authorList>
            <person name="Marchfelder A."/>
            <person name="Clayton D.A."/>
            <person name="Brennicke A."/>
        </authorList>
    </citation>
    <scope>NUCLEOTIDE SEQUENCE [GENOMIC DNA]</scope>
    <source>
        <strain>557</strain>
    </source>
</reference>
<reference key="2">
    <citation type="journal article" date="2002" name="Nature">
        <title>The genome sequence of Schizosaccharomyces pombe.</title>
        <authorList>
            <person name="Wood V."/>
            <person name="Gwilliam R."/>
            <person name="Rajandream M.A."/>
            <person name="Lyne M.H."/>
            <person name="Lyne R."/>
            <person name="Stewart A."/>
            <person name="Sgouros J.G."/>
            <person name="Peat N."/>
            <person name="Hayles J."/>
            <person name="Baker S.G."/>
            <person name="Basham D."/>
            <person name="Bowman S."/>
            <person name="Brooks K."/>
            <person name="Brown D."/>
            <person name="Brown S."/>
            <person name="Chillingworth T."/>
            <person name="Churcher C.M."/>
            <person name="Collins M."/>
            <person name="Connor R."/>
            <person name="Cronin A."/>
            <person name="Davis P."/>
            <person name="Feltwell T."/>
            <person name="Fraser A."/>
            <person name="Gentles S."/>
            <person name="Goble A."/>
            <person name="Hamlin N."/>
            <person name="Harris D.E."/>
            <person name="Hidalgo J."/>
            <person name="Hodgson G."/>
            <person name="Holroyd S."/>
            <person name="Hornsby T."/>
            <person name="Howarth S."/>
            <person name="Huckle E.J."/>
            <person name="Hunt S."/>
            <person name="Jagels K."/>
            <person name="James K.D."/>
            <person name="Jones L."/>
            <person name="Jones M."/>
            <person name="Leather S."/>
            <person name="McDonald S."/>
            <person name="McLean J."/>
            <person name="Mooney P."/>
            <person name="Moule S."/>
            <person name="Mungall K.L."/>
            <person name="Murphy L.D."/>
            <person name="Niblett D."/>
            <person name="Odell C."/>
            <person name="Oliver K."/>
            <person name="O'Neil S."/>
            <person name="Pearson D."/>
            <person name="Quail M.A."/>
            <person name="Rabbinowitsch E."/>
            <person name="Rutherford K.M."/>
            <person name="Rutter S."/>
            <person name="Saunders D."/>
            <person name="Seeger K."/>
            <person name="Sharp S."/>
            <person name="Skelton J."/>
            <person name="Simmonds M.N."/>
            <person name="Squares R."/>
            <person name="Squares S."/>
            <person name="Stevens K."/>
            <person name="Taylor K."/>
            <person name="Taylor R.G."/>
            <person name="Tivey A."/>
            <person name="Walsh S.V."/>
            <person name="Warren T."/>
            <person name="Whitehead S."/>
            <person name="Woodward J.R."/>
            <person name="Volckaert G."/>
            <person name="Aert R."/>
            <person name="Robben J."/>
            <person name="Grymonprez B."/>
            <person name="Weltjens I."/>
            <person name="Vanstreels E."/>
            <person name="Rieger M."/>
            <person name="Schaefer M."/>
            <person name="Mueller-Auer S."/>
            <person name="Gabel C."/>
            <person name="Fuchs M."/>
            <person name="Duesterhoeft A."/>
            <person name="Fritzc C."/>
            <person name="Holzer E."/>
            <person name="Moestl D."/>
            <person name="Hilbert H."/>
            <person name="Borzym K."/>
            <person name="Langer I."/>
            <person name="Beck A."/>
            <person name="Lehrach H."/>
            <person name="Reinhardt R."/>
            <person name="Pohl T.M."/>
            <person name="Eger P."/>
            <person name="Zimmermann W."/>
            <person name="Wedler H."/>
            <person name="Wambutt R."/>
            <person name="Purnelle B."/>
            <person name="Goffeau A."/>
            <person name="Cadieu E."/>
            <person name="Dreano S."/>
            <person name="Gloux S."/>
            <person name="Lelaure V."/>
            <person name="Mottier S."/>
            <person name="Galibert F."/>
            <person name="Aves S.J."/>
            <person name="Xiang Z."/>
            <person name="Hunt C."/>
            <person name="Moore K."/>
            <person name="Hurst S.M."/>
            <person name="Lucas M."/>
            <person name="Rochet M."/>
            <person name="Gaillardin C."/>
            <person name="Tallada V.A."/>
            <person name="Garzon A."/>
            <person name="Thode G."/>
            <person name="Daga R.R."/>
            <person name="Cruzado L."/>
            <person name="Jimenez J."/>
            <person name="Sanchez M."/>
            <person name="del Rey F."/>
            <person name="Benito J."/>
            <person name="Dominguez A."/>
            <person name="Revuelta J.L."/>
            <person name="Moreno S."/>
            <person name="Armstrong J."/>
            <person name="Forsburg S.L."/>
            <person name="Cerutti L."/>
            <person name="Lowe T."/>
            <person name="McCombie W.R."/>
            <person name="Paulsen I."/>
            <person name="Potashkin J."/>
            <person name="Shpakovski G.V."/>
            <person name="Ussery D."/>
            <person name="Barrell B.G."/>
            <person name="Nurse P."/>
        </authorList>
    </citation>
    <scope>NUCLEOTIDE SEQUENCE [LARGE SCALE GENOMIC DNA]</scope>
    <source>
        <strain>972 / ATCC 24843</strain>
    </source>
</reference>
<reference key="3">
    <citation type="submission" date="1997-07" db="EMBL/GenBank/DDBJ databases">
        <title>S.pombe ribosomal protein L4 homolog.</title>
        <authorList>
            <person name="Kawamukai M."/>
        </authorList>
    </citation>
    <scope>NUCLEOTIDE SEQUENCE [MRNA] OF 4-259</scope>
</reference>
<reference key="4">
    <citation type="journal article" date="2008" name="J. Proteome Res.">
        <title>Phosphoproteome analysis of fission yeast.</title>
        <authorList>
            <person name="Wilson-Grady J.T."/>
            <person name="Villen J."/>
            <person name="Gygi S.P."/>
        </authorList>
    </citation>
    <scope>PHOSPHORYLATION [LARGE SCALE ANALYSIS] AT SER-11 AND SER-33</scope>
    <scope>IDENTIFICATION BY MASS SPECTROMETRY</scope>
</reference>
<organism>
    <name type="scientific">Schizosaccharomyces pombe (strain 972 / ATCC 24843)</name>
    <name type="common">Fission yeast</name>
    <dbReference type="NCBI Taxonomy" id="284812"/>
    <lineage>
        <taxon>Eukaryota</taxon>
        <taxon>Fungi</taxon>
        <taxon>Dikarya</taxon>
        <taxon>Ascomycota</taxon>
        <taxon>Taphrinomycotina</taxon>
        <taxon>Schizosaccharomycetes</taxon>
        <taxon>Schizosaccharomycetales</taxon>
        <taxon>Schizosaccharomycetaceae</taxon>
        <taxon>Schizosaccharomyces</taxon>
    </lineage>
</organism>
<comment type="function">
    <text evidence="2">Component of the ribosome, a large ribonucleoprotein complex responsible for the synthesis of proteins in the cell. The small ribosomal subunit (SSU) binds messenger RNAs (mRNAs) and translates the encoded message by selecting cognate aminoacyl-transfer RNA (tRNA) molecules. The large subunit (LSU) contains the ribosomal catalytic site termed the peptidyl transferase center (PTC), which catalyzes the formation of peptide bonds, thereby polymerizing the amino acids delivered by tRNAs into a polypeptide chain. The nascent polypeptides leave the ribosome through a tunnel in the LSU and interact with protein factors that function in enzymatic processing, targeting, and the membrane insertion of nascent chains at the exit of the ribosomal tunnel.</text>
</comment>
<comment type="subunit">
    <text evidence="2">Component of the large ribosomal subunit (LSU). Mature yeast ribosomes consist of a small (40S) and a large (60S) subunit. The 40S small subunit contains 1 molecule of ribosomal RNA (18S rRNA) and at least 33 different proteins. The large 60S subunit contains 3 rRNA molecules (25S, 5.8S and 5S rRNA) and at least 46 different proteins.</text>
</comment>
<comment type="subcellular location">
    <subcellularLocation>
        <location evidence="2">Cytoplasm</location>
    </subcellularLocation>
</comment>
<comment type="similarity">
    <text evidence="5">Belongs to the eukaryotic ribosomal protein eL8 family.</text>
</comment>